<sequence length="375" mass="41269">MSCPVIELTQQLIRRPSLSPDDAGCQALLIERLQAIGFTVERMDFADTQNFWAWRGQGETLAFAGHTDVVPPGDADRWINPPFEPTIRDGMLFGRGAADMKGSLAAMVVAAERFVAQHPNHTGRLAFLITSDEEASAHNGTVKVVEALMARNERLDYCLVGEPSSIEVVGDVVKNGRRGSLTCNLTIHGVQGHVAYPHLADNPVHRAAPFLNELVAIEWDQGNEFFPATSMQIANIQAGTGSNNVIPGELFVQFNFRFSTELTDEMIKAQVLALLEKHQLRYTVDWWLSGQPFLTARGKLVDAVVNAVEHYNEIKPQLLTTGGTSDGRFIARMGAQVVELGPVNATIHKINECVNAADLQLLARMYQRIMEQLVA</sequence>
<gene>
    <name evidence="1" type="primary">dapE</name>
    <name type="ordered locus">EcSMS35_2618</name>
</gene>
<dbReference type="EC" id="3.5.1.18" evidence="1"/>
<dbReference type="EMBL" id="CP000970">
    <property type="protein sequence ID" value="ACB19797.1"/>
    <property type="molecule type" value="Genomic_DNA"/>
</dbReference>
<dbReference type="RefSeq" id="WP_001277801.1">
    <property type="nucleotide sequence ID" value="NC_010498.1"/>
</dbReference>
<dbReference type="SMR" id="B1LNC1"/>
<dbReference type="MEROPS" id="M20.010"/>
<dbReference type="KEGG" id="ecm:EcSMS35_2618"/>
<dbReference type="HOGENOM" id="CLU_021802_4_0_6"/>
<dbReference type="UniPathway" id="UPA00034">
    <property type="reaction ID" value="UER00021"/>
</dbReference>
<dbReference type="Proteomes" id="UP000007011">
    <property type="component" value="Chromosome"/>
</dbReference>
<dbReference type="GO" id="GO:0008777">
    <property type="term" value="F:acetylornithine deacetylase activity"/>
    <property type="evidence" value="ECO:0007669"/>
    <property type="project" value="TreeGrafter"/>
</dbReference>
<dbReference type="GO" id="GO:0050897">
    <property type="term" value="F:cobalt ion binding"/>
    <property type="evidence" value="ECO:0007669"/>
    <property type="project" value="UniProtKB-UniRule"/>
</dbReference>
<dbReference type="GO" id="GO:0009014">
    <property type="term" value="F:succinyl-diaminopimelate desuccinylase activity"/>
    <property type="evidence" value="ECO:0007669"/>
    <property type="project" value="UniProtKB-UniRule"/>
</dbReference>
<dbReference type="GO" id="GO:0008270">
    <property type="term" value="F:zinc ion binding"/>
    <property type="evidence" value="ECO:0007669"/>
    <property type="project" value="UniProtKB-UniRule"/>
</dbReference>
<dbReference type="GO" id="GO:0019877">
    <property type="term" value="P:diaminopimelate biosynthetic process"/>
    <property type="evidence" value="ECO:0007669"/>
    <property type="project" value="UniProtKB-UniRule"/>
</dbReference>
<dbReference type="GO" id="GO:0006526">
    <property type="term" value="P:L-arginine biosynthetic process"/>
    <property type="evidence" value="ECO:0007669"/>
    <property type="project" value="TreeGrafter"/>
</dbReference>
<dbReference type="GO" id="GO:0009089">
    <property type="term" value="P:lysine biosynthetic process via diaminopimelate"/>
    <property type="evidence" value="ECO:0007669"/>
    <property type="project" value="UniProtKB-UniRule"/>
</dbReference>
<dbReference type="CDD" id="cd03891">
    <property type="entry name" value="M20_DapE_proteobac"/>
    <property type="match status" value="1"/>
</dbReference>
<dbReference type="FunFam" id="3.30.70.360:FF:000011">
    <property type="entry name" value="Succinyl-diaminopimelate desuccinylase"/>
    <property type="match status" value="1"/>
</dbReference>
<dbReference type="FunFam" id="3.40.630.10:FF:000005">
    <property type="entry name" value="Succinyl-diaminopimelate desuccinylase"/>
    <property type="match status" value="1"/>
</dbReference>
<dbReference type="FunFam" id="3.40.630.10:FF:000010">
    <property type="entry name" value="Succinyl-diaminopimelate desuccinylase"/>
    <property type="match status" value="1"/>
</dbReference>
<dbReference type="Gene3D" id="3.40.630.10">
    <property type="entry name" value="Zn peptidases"/>
    <property type="match status" value="2"/>
</dbReference>
<dbReference type="HAMAP" id="MF_01690">
    <property type="entry name" value="DapE"/>
    <property type="match status" value="1"/>
</dbReference>
<dbReference type="InterPro" id="IPR001261">
    <property type="entry name" value="ArgE/DapE_CS"/>
</dbReference>
<dbReference type="InterPro" id="IPR036264">
    <property type="entry name" value="Bact_exopeptidase_dim_dom"/>
</dbReference>
<dbReference type="InterPro" id="IPR005941">
    <property type="entry name" value="DapE_proteobac"/>
</dbReference>
<dbReference type="InterPro" id="IPR002933">
    <property type="entry name" value="Peptidase_M20"/>
</dbReference>
<dbReference type="InterPro" id="IPR011650">
    <property type="entry name" value="Peptidase_M20_dimer"/>
</dbReference>
<dbReference type="InterPro" id="IPR050072">
    <property type="entry name" value="Peptidase_M20A"/>
</dbReference>
<dbReference type="NCBIfam" id="TIGR01246">
    <property type="entry name" value="dapE_proteo"/>
    <property type="match status" value="1"/>
</dbReference>
<dbReference type="NCBIfam" id="NF009557">
    <property type="entry name" value="PRK13009.1"/>
    <property type="match status" value="1"/>
</dbReference>
<dbReference type="PANTHER" id="PTHR43808">
    <property type="entry name" value="ACETYLORNITHINE DEACETYLASE"/>
    <property type="match status" value="1"/>
</dbReference>
<dbReference type="PANTHER" id="PTHR43808:SF31">
    <property type="entry name" value="N-ACETYL-L-CITRULLINE DEACETYLASE"/>
    <property type="match status" value="1"/>
</dbReference>
<dbReference type="Pfam" id="PF07687">
    <property type="entry name" value="M20_dimer"/>
    <property type="match status" value="1"/>
</dbReference>
<dbReference type="Pfam" id="PF01546">
    <property type="entry name" value="Peptidase_M20"/>
    <property type="match status" value="1"/>
</dbReference>
<dbReference type="SUPFAM" id="SSF55031">
    <property type="entry name" value="Bacterial exopeptidase dimerisation domain"/>
    <property type="match status" value="1"/>
</dbReference>
<dbReference type="SUPFAM" id="SSF53187">
    <property type="entry name" value="Zn-dependent exopeptidases"/>
    <property type="match status" value="1"/>
</dbReference>
<dbReference type="PROSITE" id="PS00758">
    <property type="entry name" value="ARGE_DAPE_CPG2_1"/>
    <property type="match status" value="1"/>
</dbReference>
<dbReference type="PROSITE" id="PS00759">
    <property type="entry name" value="ARGE_DAPE_CPG2_2"/>
    <property type="match status" value="1"/>
</dbReference>
<proteinExistence type="inferred from homology"/>
<protein>
    <recommendedName>
        <fullName evidence="1">Succinyl-diaminopimelate desuccinylase</fullName>
        <shortName evidence="1">SDAP desuccinylase</shortName>
        <ecNumber evidence="1">3.5.1.18</ecNumber>
    </recommendedName>
    <alternativeName>
        <fullName evidence="1">N-succinyl-LL-2,6-diaminoheptanedioate amidohydrolase</fullName>
    </alternativeName>
</protein>
<comment type="function">
    <text evidence="1">Catalyzes the hydrolysis of N-succinyl-L,L-diaminopimelic acid (SDAP), forming succinate and LL-2,6-diaminopimelate (DAP), an intermediate involved in the bacterial biosynthesis of lysine and meso-diaminopimelic acid, an essential component of bacterial cell walls.</text>
</comment>
<comment type="catalytic activity">
    <reaction evidence="1">
        <text>N-succinyl-(2S,6S)-2,6-diaminopimelate + H2O = (2S,6S)-2,6-diaminopimelate + succinate</text>
        <dbReference type="Rhea" id="RHEA:22608"/>
        <dbReference type="ChEBI" id="CHEBI:15377"/>
        <dbReference type="ChEBI" id="CHEBI:30031"/>
        <dbReference type="ChEBI" id="CHEBI:57609"/>
        <dbReference type="ChEBI" id="CHEBI:58087"/>
        <dbReference type="EC" id="3.5.1.18"/>
    </reaction>
</comment>
<comment type="cofactor">
    <cofactor evidence="1">
        <name>Zn(2+)</name>
        <dbReference type="ChEBI" id="CHEBI:29105"/>
    </cofactor>
    <cofactor evidence="1">
        <name>Co(2+)</name>
        <dbReference type="ChEBI" id="CHEBI:48828"/>
    </cofactor>
    <text evidence="1">Binds 2 Zn(2+) or Co(2+) ions per subunit.</text>
</comment>
<comment type="pathway">
    <text evidence="1">Amino-acid biosynthesis; L-lysine biosynthesis via DAP pathway; LL-2,6-diaminopimelate from (S)-tetrahydrodipicolinate (succinylase route): step 3/3.</text>
</comment>
<comment type="subunit">
    <text evidence="1">Homodimer.</text>
</comment>
<comment type="similarity">
    <text evidence="1">Belongs to the peptidase M20A family. DapE subfamily.</text>
</comment>
<feature type="chain" id="PRO_0000375557" description="Succinyl-diaminopimelate desuccinylase">
    <location>
        <begin position="1"/>
        <end position="375"/>
    </location>
</feature>
<feature type="active site" evidence="1">
    <location>
        <position position="68"/>
    </location>
</feature>
<feature type="active site" description="Proton acceptor" evidence="1">
    <location>
        <position position="133"/>
    </location>
</feature>
<feature type="binding site" evidence="1">
    <location>
        <position position="66"/>
    </location>
    <ligand>
        <name>Zn(2+)</name>
        <dbReference type="ChEBI" id="CHEBI:29105"/>
        <label>1</label>
    </ligand>
</feature>
<feature type="binding site" evidence="1">
    <location>
        <position position="99"/>
    </location>
    <ligand>
        <name>Zn(2+)</name>
        <dbReference type="ChEBI" id="CHEBI:29105"/>
        <label>1</label>
    </ligand>
</feature>
<feature type="binding site" evidence="1">
    <location>
        <position position="99"/>
    </location>
    <ligand>
        <name>Zn(2+)</name>
        <dbReference type="ChEBI" id="CHEBI:29105"/>
        <label>2</label>
    </ligand>
</feature>
<feature type="binding site" evidence="1">
    <location>
        <position position="134"/>
    </location>
    <ligand>
        <name>Zn(2+)</name>
        <dbReference type="ChEBI" id="CHEBI:29105"/>
        <label>2</label>
    </ligand>
</feature>
<feature type="binding site" evidence="1">
    <location>
        <position position="162"/>
    </location>
    <ligand>
        <name>Zn(2+)</name>
        <dbReference type="ChEBI" id="CHEBI:29105"/>
        <label>1</label>
    </ligand>
</feature>
<feature type="binding site" evidence="1">
    <location>
        <position position="348"/>
    </location>
    <ligand>
        <name>Zn(2+)</name>
        <dbReference type="ChEBI" id="CHEBI:29105"/>
        <label>2</label>
    </ligand>
</feature>
<organism>
    <name type="scientific">Escherichia coli (strain SMS-3-5 / SECEC)</name>
    <dbReference type="NCBI Taxonomy" id="439855"/>
    <lineage>
        <taxon>Bacteria</taxon>
        <taxon>Pseudomonadati</taxon>
        <taxon>Pseudomonadota</taxon>
        <taxon>Gammaproteobacteria</taxon>
        <taxon>Enterobacterales</taxon>
        <taxon>Enterobacteriaceae</taxon>
        <taxon>Escherichia</taxon>
    </lineage>
</organism>
<accession>B1LNC1</accession>
<name>DAPE_ECOSM</name>
<evidence type="ECO:0000255" key="1">
    <source>
        <dbReference type="HAMAP-Rule" id="MF_01690"/>
    </source>
</evidence>
<keyword id="KW-0028">Amino-acid biosynthesis</keyword>
<keyword id="KW-0170">Cobalt</keyword>
<keyword id="KW-0220">Diaminopimelate biosynthesis</keyword>
<keyword id="KW-0378">Hydrolase</keyword>
<keyword id="KW-0457">Lysine biosynthesis</keyword>
<keyword id="KW-0479">Metal-binding</keyword>
<keyword id="KW-0862">Zinc</keyword>
<reference key="1">
    <citation type="journal article" date="2008" name="J. Bacteriol.">
        <title>Insights into the environmental resistance gene pool from the genome sequence of the multidrug-resistant environmental isolate Escherichia coli SMS-3-5.</title>
        <authorList>
            <person name="Fricke W.F."/>
            <person name="Wright M.S."/>
            <person name="Lindell A.H."/>
            <person name="Harkins D.M."/>
            <person name="Baker-Austin C."/>
            <person name="Ravel J."/>
            <person name="Stepanauskas R."/>
        </authorList>
    </citation>
    <scope>NUCLEOTIDE SEQUENCE [LARGE SCALE GENOMIC DNA]</scope>
    <source>
        <strain>SMS-3-5 / SECEC</strain>
    </source>
</reference>